<protein>
    <recommendedName>
        <fullName>Alpha-synuclein</fullName>
    </recommendedName>
</protein>
<keyword id="KW-0007">Acetylation</keyword>
<keyword id="KW-0966">Cell projection</keyword>
<keyword id="KW-0186">Copper</keyword>
<keyword id="KW-0963">Cytoplasm</keyword>
<keyword id="KW-0472">Membrane</keyword>
<keyword id="KW-0479">Metal-binding</keyword>
<keyword id="KW-0539">Nucleus</keyword>
<keyword id="KW-0597">Phosphoprotein</keyword>
<keyword id="KW-0677">Repeat</keyword>
<keyword id="KW-0964">Secreted</keyword>
<keyword id="KW-0770">Synapse</keyword>
<keyword id="KW-0832">Ubl conjugation</keyword>
<sequence length="140" mass="14446">MDVFMKGLSKAKEGVVAAAEKTKQGVAEAAGKTKEGVLYVGSKTKEGVVHGVTTVAEKTKEQVTSVGGAVVTGVTAVAQKTVEGAGNIAAATGFVKKDHSGKSEEGAPQEGILEDMPVDPDNEAYEMPSEEGYQDYEPEA</sequence>
<evidence type="ECO:0000250" key="1"/>
<evidence type="ECO:0000250" key="2">
    <source>
        <dbReference type="UniProtKB" id="O55042"/>
    </source>
</evidence>
<evidence type="ECO:0000250" key="3">
    <source>
        <dbReference type="UniProtKB" id="P37377"/>
    </source>
</evidence>
<evidence type="ECO:0000250" key="4">
    <source>
        <dbReference type="UniProtKB" id="P37840"/>
    </source>
</evidence>
<evidence type="ECO:0000256" key="5">
    <source>
        <dbReference type="SAM" id="MobiDB-lite"/>
    </source>
</evidence>
<evidence type="ECO:0000305" key="6"/>
<reference key="1">
    <citation type="journal article" date="2004" name="Genomics">
        <title>Alpha-synuclein A53T substitution associated with Parkinson disease also marks the divergence of Old World and New World primates.</title>
        <authorList>
            <person name="Hamilton B.A."/>
        </authorList>
    </citation>
    <scope>NUCLEOTIDE SEQUENCE [GENOMIC DNA]</scope>
</reference>
<accession>P61141</accession>
<dbReference type="EMBL" id="AY362334">
    <property type="protein sequence ID" value="AAQ85073.1"/>
    <property type="molecule type" value="Genomic_DNA"/>
</dbReference>
<dbReference type="EMBL" id="AY362330">
    <property type="protein sequence ID" value="AAQ85073.1"/>
    <property type="status" value="JOINED"/>
    <property type="molecule type" value="Genomic_DNA"/>
</dbReference>
<dbReference type="EMBL" id="AY362331">
    <property type="protein sequence ID" value="AAQ85073.1"/>
    <property type="status" value="JOINED"/>
    <property type="molecule type" value="Genomic_DNA"/>
</dbReference>
<dbReference type="EMBL" id="AY362332">
    <property type="protein sequence ID" value="AAQ85073.1"/>
    <property type="status" value="JOINED"/>
    <property type="molecule type" value="Genomic_DNA"/>
</dbReference>
<dbReference type="EMBL" id="AY362333">
    <property type="protein sequence ID" value="AAQ85073.1"/>
    <property type="status" value="JOINED"/>
    <property type="molecule type" value="Genomic_DNA"/>
</dbReference>
<dbReference type="BMRB" id="P61141"/>
<dbReference type="GO" id="GO:0043679">
    <property type="term" value="C:axon terminus"/>
    <property type="evidence" value="ECO:0007669"/>
    <property type="project" value="TreeGrafter"/>
</dbReference>
<dbReference type="GO" id="GO:0005829">
    <property type="term" value="C:cytosol"/>
    <property type="evidence" value="ECO:0000250"/>
    <property type="project" value="UniProtKB"/>
</dbReference>
<dbReference type="GO" id="GO:0005615">
    <property type="term" value="C:extracellular space"/>
    <property type="evidence" value="ECO:0000250"/>
    <property type="project" value="UniProtKB"/>
</dbReference>
<dbReference type="GO" id="GO:0016020">
    <property type="term" value="C:membrane"/>
    <property type="evidence" value="ECO:0000250"/>
    <property type="project" value="UniProtKB"/>
</dbReference>
<dbReference type="GO" id="GO:0043025">
    <property type="term" value="C:neuronal cell body"/>
    <property type="evidence" value="ECO:0007669"/>
    <property type="project" value="TreeGrafter"/>
</dbReference>
<dbReference type="GO" id="GO:0005634">
    <property type="term" value="C:nucleus"/>
    <property type="evidence" value="ECO:0000250"/>
    <property type="project" value="UniProtKB"/>
</dbReference>
<dbReference type="GO" id="GO:0005507">
    <property type="term" value="F:copper ion binding"/>
    <property type="evidence" value="ECO:0000250"/>
    <property type="project" value="UniProtKB"/>
</dbReference>
<dbReference type="GO" id="GO:1903136">
    <property type="term" value="F:cuprous ion binding"/>
    <property type="evidence" value="ECO:0007669"/>
    <property type="project" value="TreeGrafter"/>
</dbReference>
<dbReference type="GO" id="GO:0042802">
    <property type="term" value="F:identical protein binding"/>
    <property type="evidence" value="ECO:0000250"/>
    <property type="project" value="UniProtKB"/>
</dbReference>
<dbReference type="GO" id="GO:0007268">
    <property type="term" value="P:chemical synaptic transmission"/>
    <property type="evidence" value="ECO:0007669"/>
    <property type="project" value="TreeGrafter"/>
</dbReference>
<dbReference type="GO" id="GO:0014059">
    <property type="term" value="P:regulation of dopamine secretion"/>
    <property type="evidence" value="ECO:0007669"/>
    <property type="project" value="InterPro"/>
</dbReference>
<dbReference type="GO" id="GO:0050808">
    <property type="term" value="P:synapse organization"/>
    <property type="evidence" value="ECO:0007669"/>
    <property type="project" value="TreeGrafter"/>
</dbReference>
<dbReference type="GO" id="GO:0048488">
    <property type="term" value="P:synaptic vesicle endocytosis"/>
    <property type="evidence" value="ECO:0007669"/>
    <property type="project" value="TreeGrafter"/>
</dbReference>
<dbReference type="FunFam" id="1.10.287.700:FF:000001">
    <property type="entry name" value="Alpha-synuclein"/>
    <property type="match status" value="1"/>
</dbReference>
<dbReference type="Gene3D" id="1.10.287.700">
    <property type="entry name" value="Helix hairpin bin"/>
    <property type="match status" value="1"/>
</dbReference>
<dbReference type="InterPro" id="IPR001058">
    <property type="entry name" value="Synuclein"/>
</dbReference>
<dbReference type="InterPro" id="IPR002460">
    <property type="entry name" value="Synuclein_alpha"/>
</dbReference>
<dbReference type="PANTHER" id="PTHR13820:SF5">
    <property type="entry name" value="ALPHA-SYNUCLEIN"/>
    <property type="match status" value="1"/>
</dbReference>
<dbReference type="PANTHER" id="PTHR13820">
    <property type="entry name" value="SYNUCLEIN"/>
    <property type="match status" value="1"/>
</dbReference>
<dbReference type="Pfam" id="PF01387">
    <property type="entry name" value="Synuclein"/>
    <property type="match status" value="1"/>
</dbReference>
<dbReference type="PRINTS" id="PR01212">
    <property type="entry name" value="ASYNUCLEIN"/>
</dbReference>
<dbReference type="PRINTS" id="PR01211">
    <property type="entry name" value="SYNUCLEIN"/>
</dbReference>
<dbReference type="SUPFAM" id="SSF118375">
    <property type="entry name" value="Synuclein"/>
    <property type="match status" value="1"/>
</dbReference>
<organism>
    <name type="scientific">Lagothrix lagotricha</name>
    <name type="common">Brown woolly monkey</name>
    <name type="synonym">Humboldt's woolly monkey</name>
    <dbReference type="NCBI Taxonomy" id="9519"/>
    <lineage>
        <taxon>Eukaryota</taxon>
        <taxon>Metazoa</taxon>
        <taxon>Chordata</taxon>
        <taxon>Craniata</taxon>
        <taxon>Vertebrata</taxon>
        <taxon>Euteleostomi</taxon>
        <taxon>Mammalia</taxon>
        <taxon>Eutheria</taxon>
        <taxon>Euarchontoglires</taxon>
        <taxon>Primates</taxon>
        <taxon>Haplorrhini</taxon>
        <taxon>Platyrrhini</taxon>
        <taxon>Atelidae</taxon>
        <taxon>Atelinae</taxon>
        <taxon>Lagothrix</taxon>
    </lineage>
</organism>
<gene>
    <name type="primary">SNCA</name>
</gene>
<name>SYUA_LAGLA</name>
<feature type="chain" id="PRO_0000184023" description="Alpha-synuclein">
    <location>
        <begin position="1"/>
        <end position="140"/>
    </location>
</feature>
<feature type="region of interest" description="Disordered" evidence="5">
    <location>
        <begin position="97"/>
        <end position="140"/>
    </location>
</feature>
<feature type="region of interest" description="Interaction with SERF1A" evidence="4">
    <location>
        <begin position="111"/>
        <end position="140"/>
    </location>
</feature>
<feature type="compositionally biased region" description="Acidic residues" evidence="5">
    <location>
        <begin position="112"/>
        <end position="140"/>
    </location>
</feature>
<feature type="binding site" evidence="1">
    <location>
        <position position="2"/>
    </location>
    <ligand>
        <name>Cu cation</name>
        <dbReference type="ChEBI" id="CHEBI:23378"/>
    </ligand>
</feature>
<feature type="binding site" evidence="1">
    <location>
        <position position="50"/>
    </location>
    <ligand>
        <name>Cu cation</name>
        <dbReference type="ChEBI" id="CHEBI:23378"/>
    </ligand>
</feature>
<feature type="modified residue" description="N-acetylmethionine" evidence="4">
    <location>
        <position position="1"/>
    </location>
</feature>
<feature type="modified residue" description="Phosphotyrosine; by FYN" evidence="4">
    <location>
        <position position="125"/>
    </location>
</feature>
<feature type="modified residue" description="Phosphoserine; by PLK2" evidence="4">
    <location>
        <position position="129"/>
    </location>
</feature>
<comment type="function">
    <text evidence="4">Neuronal protein that plays several roles in synaptic activity such as regulation of synaptic vesicle trafficking and subsequent neurotransmitter release (By similarity). Participates as a monomer in synaptic vesicle exocytosis by enhancing vesicle priming, fusion and dilation of exocytotic fusion pores (By similarity). Mechanistically, acts by increasing local Ca(2+) release from microdomains which is essential for the enhancement of ATP-induced exocytosis (By similarity). Also acts as a molecular chaperone in its multimeric membrane-bound state, assisting in the folding of synaptic fusion components called SNAREs (Soluble NSF Attachment Protein REceptors) at presynaptic plasma membrane in conjunction with cysteine string protein-alpha/DNAJC5 (By similarity). This chaperone activity is important to sustain normal SNARE-complex assembly during aging (By similarity). Also plays a role in the regulation of the dopamine neurotransmission by associating with the dopamine transporter (DAT1) and thereby modulating its activity (By similarity).</text>
</comment>
<comment type="subunit">
    <text evidence="2 4">Soluble monomer. Homotetramer. A dynamic intracellular population of tetramers and monomers coexists normally and the tetramer plays an essential role in maintaining homeostasis (By similarity). Interacts with UCHL1 (By similarity). Interacts with phospholipase D and histones. Interacts (via N-terminus) with synphilin-1/SNCAIP; this interaction promotes formation of SNCA inclusions in the cytoplasm. Interacts with CALM1. Interacts with STXBP1; this interaction controls SNCA self-replicating aggregation. Interacts with SNARE components VAMP2 and SNAP25; these interactions allows SNARE complex assembly and integrity (By similarity). Interacts with RPH3A and RAB3A (By similarity). Interacts with SERF1A; this interaction promotes the aggregation of SNCA (By similarity). Interacts with SEPTIN4 (By similarity). Interacts with DDX10; this interaction causes DDX10 mislocalization to the nucleoplasm and cytoplasmic inclusions (By similarity).</text>
</comment>
<comment type="subcellular location">
    <subcellularLocation>
        <location evidence="4">Cytoplasm</location>
        <location evidence="4">Cytosol</location>
    </subcellularLocation>
    <subcellularLocation>
        <location evidence="4">Membrane</location>
    </subcellularLocation>
    <subcellularLocation>
        <location evidence="4">Nucleus</location>
    </subcellularLocation>
    <subcellularLocation>
        <location evidence="4">Synapse</location>
    </subcellularLocation>
    <subcellularLocation>
        <location evidence="4">Secreted</location>
    </subcellularLocation>
    <subcellularLocation>
        <location evidence="2">Cell projection</location>
        <location evidence="2">Axon</location>
    </subcellularLocation>
    <text evidence="2 4">Membrane-bound in dopaminergic neurons (By similarity). Expressed and colocalized with SEPTIN4 in dopaminergic axon terminals, especially at the varicosities (By similarity).</text>
</comment>
<comment type="PTM">
    <text evidence="4">Phosphorylated, predominantly on serine residues. Phosphorylated on Tyr-125 upon osmotic stress.</text>
</comment>
<comment type="PTM">
    <text evidence="3">Ubiquitinated. The predominant conjugate is the diubiquitinated form.</text>
</comment>
<comment type="PTM">
    <text evidence="4">Acetylation at Met-1 seems to be important for proper folding and native oligomeric structure.</text>
</comment>
<comment type="similarity">
    <text evidence="6">Belongs to the synuclein family.</text>
</comment>
<proteinExistence type="inferred from homology"/>